<name>SPRTL_STRU0</name>
<sequence length="147" mass="17870">MNLTDYVNEVSLEDFAKPFKHHAYWNKRLRTTGGRFFPKDGHLDFNPKMFQEFGQETFRRIVRHELCHYHLYFEGKGYQHKDLDFKRLLKEVDGLRYAPRSTKERGSINYRCQKCGHCYKRQRRINLQKYVCSFCRGHLKEINQSKD</sequence>
<dbReference type="EMBL" id="AM946015">
    <property type="protein sequence ID" value="CAR41364.1"/>
    <property type="molecule type" value="Genomic_DNA"/>
</dbReference>
<dbReference type="RefSeq" id="WP_012658100.1">
    <property type="nucleotide sequence ID" value="NC_012004.1"/>
</dbReference>
<dbReference type="STRING" id="218495.SUB0575"/>
<dbReference type="KEGG" id="sub:SUB0575"/>
<dbReference type="eggNOG" id="COG3091">
    <property type="taxonomic scope" value="Bacteria"/>
</dbReference>
<dbReference type="HOGENOM" id="CLU_123820_0_0_9"/>
<dbReference type="OrthoDB" id="9799909at2"/>
<dbReference type="Proteomes" id="UP000000449">
    <property type="component" value="Chromosome"/>
</dbReference>
<dbReference type="GO" id="GO:0005737">
    <property type="term" value="C:cytoplasm"/>
    <property type="evidence" value="ECO:0007669"/>
    <property type="project" value="UniProtKB-SubCell"/>
</dbReference>
<dbReference type="GO" id="GO:0008270">
    <property type="term" value="F:zinc ion binding"/>
    <property type="evidence" value="ECO:0007669"/>
    <property type="project" value="UniProtKB-UniRule"/>
</dbReference>
<dbReference type="GO" id="GO:0006950">
    <property type="term" value="P:response to stress"/>
    <property type="evidence" value="ECO:0007669"/>
    <property type="project" value="UniProtKB-ARBA"/>
</dbReference>
<dbReference type="HAMAP" id="MF_00745">
    <property type="entry name" value="SprT_like"/>
    <property type="match status" value="1"/>
</dbReference>
<dbReference type="InterPro" id="IPR006640">
    <property type="entry name" value="SprT-like_domain"/>
</dbReference>
<dbReference type="InterPro" id="IPR023524">
    <property type="entry name" value="Uncharacterised_SprT-like"/>
</dbReference>
<dbReference type="NCBIfam" id="NF003339">
    <property type="entry name" value="PRK04351.1"/>
    <property type="match status" value="1"/>
</dbReference>
<dbReference type="Pfam" id="PF10263">
    <property type="entry name" value="SprT-like"/>
    <property type="match status" value="1"/>
</dbReference>
<dbReference type="SMART" id="SM00731">
    <property type="entry name" value="SprT"/>
    <property type="match status" value="1"/>
</dbReference>
<gene>
    <name type="ordered locus">SUB0575</name>
</gene>
<proteinExistence type="inferred from homology"/>
<protein>
    <recommendedName>
        <fullName evidence="1">Protein SprT-like</fullName>
    </recommendedName>
</protein>
<accession>B9DRJ1</accession>
<feature type="chain" id="PRO_1000148328" description="Protein SprT-like">
    <location>
        <begin position="1"/>
        <end position="147"/>
    </location>
</feature>
<feature type="domain" description="SprT-like" evidence="1">
    <location>
        <begin position="5"/>
        <end position="142"/>
    </location>
</feature>
<feature type="active site" evidence="1">
    <location>
        <position position="65"/>
    </location>
</feature>
<feature type="binding site" evidence="1">
    <location>
        <position position="64"/>
    </location>
    <ligand>
        <name>Zn(2+)</name>
        <dbReference type="ChEBI" id="CHEBI:29105"/>
    </ligand>
</feature>
<feature type="binding site" evidence="1">
    <location>
        <position position="68"/>
    </location>
    <ligand>
        <name>Zn(2+)</name>
        <dbReference type="ChEBI" id="CHEBI:29105"/>
    </ligand>
</feature>
<evidence type="ECO:0000255" key="1">
    <source>
        <dbReference type="HAMAP-Rule" id="MF_00745"/>
    </source>
</evidence>
<reference key="1">
    <citation type="journal article" date="2009" name="BMC Genomics">
        <title>Evidence for niche adaptation in the genome of the bovine pathogen Streptococcus uberis.</title>
        <authorList>
            <person name="Ward P.N."/>
            <person name="Holden M.T.G."/>
            <person name="Leigh J.A."/>
            <person name="Lennard N."/>
            <person name="Bignell A."/>
            <person name="Barron A."/>
            <person name="Clark L."/>
            <person name="Quail M.A."/>
            <person name="Woodward J."/>
            <person name="Barrell B.G."/>
            <person name="Egan S.A."/>
            <person name="Field T.R."/>
            <person name="Maskell D."/>
            <person name="Kehoe M."/>
            <person name="Dowson C.G."/>
            <person name="Chanter N."/>
            <person name="Whatmore A.M."/>
            <person name="Bentley S.D."/>
            <person name="Parkhill J."/>
        </authorList>
    </citation>
    <scope>NUCLEOTIDE SEQUENCE [LARGE SCALE GENOMIC DNA]</scope>
    <source>
        <strain>ATCC BAA-854 / 0140J</strain>
    </source>
</reference>
<keyword id="KW-0963">Cytoplasm</keyword>
<keyword id="KW-0479">Metal-binding</keyword>
<keyword id="KW-1185">Reference proteome</keyword>
<keyword id="KW-0862">Zinc</keyword>
<comment type="cofactor">
    <cofactor evidence="1">
        <name>Zn(2+)</name>
        <dbReference type="ChEBI" id="CHEBI:29105"/>
    </cofactor>
    <text evidence="1">Binds 1 zinc ion.</text>
</comment>
<comment type="subcellular location">
    <subcellularLocation>
        <location evidence="1">Cytoplasm</location>
    </subcellularLocation>
</comment>
<comment type="similarity">
    <text evidence="1">Belongs to the SprT family.</text>
</comment>
<organism>
    <name type="scientific">Streptococcus uberis (strain ATCC BAA-854 / 0140J)</name>
    <dbReference type="NCBI Taxonomy" id="218495"/>
    <lineage>
        <taxon>Bacteria</taxon>
        <taxon>Bacillati</taxon>
        <taxon>Bacillota</taxon>
        <taxon>Bacilli</taxon>
        <taxon>Lactobacillales</taxon>
        <taxon>Streptococcaceae</taxon>
        <taxon>Streptococcus</taxon>
    </lineage>
</organism>